<evidence type="ECO:0000250" key="1"/>
<evidence type="ECO:0000250" key="2">
    <source>
        <dbReference type="UniProtKB" id="P40936"/>
    </source>
</evidence>
<evidence type="ECO:0000305" key="3"/>
<name>INMT_PONAB</name>
<sequence length="263" mass="28848">MEGGFTGGDEYQKHFLPRDYLATYYSFDGSPSPEAEMLKFNLECLHKTFGPGGLQGDTLIDIGSGPTIYQVLAACESFQDITLSDFTDRNREELEKWLKKEPGAYDWTPVVKFACELEGNSGQWEEKEEKLRATVKRVLKCDVHLGNPLAPAVLPPADCVLTLLAMECACCSLDAYCAALCNLASLLKPGGHLVTTVTLRLSSYMVGKREFSCVALEKEEVEQAVLDAGFDIEQLLQSPQSYSVTNAANNGVCFIVARKKPGP</sequence>
<feature type="chain" id="PRO_0000159714" description="Indolethylamine N-methyltransferase">
    <location>
        <begin position="1"/>
        <end position="263"/>
    </location>
</feature>
<feature type="binding site" evidence="1">
    <location>
        <position position="20"/>
    </location>
    <ligand>
        <name>S-adenosyl-L-methionine</name>
        <dbReference type="ChEBI" id="CHEBI:59789"/>
    </ligand>
</feature>
<feature type="binding site" evidence="1">
    <location>
        <position position="25"/>
    </location>
    <ligand>
        <name>S-adenosyl-L-methionine</name>
        <dbReference type="ChEBI" id="CHEBI:59789"/>
    </ligand>
</feature>
<feature type="binding site" evidence="1">
    <location>
        <begin position="63"/>
        <end position="64"/>
    </location>
    <ligand>
        <name>S-adenosyl-L-methionine</name>
        <dbReference type="ChEBI" id="CHEBI:59789"/>
    </ligand>
</feature>
<feature type="binding site" evidence="1">
    <location>
        <position position="69"/>
    </location>
    <ligand>
        <name>S-adenosyl-L-methionine</name>
        <dbReference type="ChEBI" id="CHEBI:59789"/>
    </ligand>
</feature>
<feature type="binding site" evidence="1">
    <location>
        <position position="85"/>
    </location>
    <ligand>
        <name>S-adenosyl-L-methionine</name>
        <dbReference type="ChEBI" id="CHEBI:59789"/>
    </ligand>
</feature>
<feature type="binding site" evidence="1">
    <location>
        <position position="90"/>
    </location>
    <ligand>
        <name>S-adenosyl-L-methionine</name>
        <dbReference type="ChEBI" id="CHEBI:59789"/>
    </ligand>
</feature>
<feature type="binding site" evidence="1">
    <location>
        <begin position="142"/>
        <end position="143"/>
    </location>
    <ligand>
        <name>S-adenosyl-L-methionine</name>
        <dbReference type="ChEBI" id="CHEBI:59789"/>
    </ligand>
</feature>
<feature type="binding site" evidence="1">
    <location>
        <position position="163"/>
    </location>
    <ligand>
        <name>S-adenosyl-L-methionine</name>
        <dbReference type="ChEBI" id="CHEBI:59789"/>
    </ligand>
</feature>
<feature type="modified residue" description="N6-succinyllysine" evidence="2">
    <location>
        <position position="13"/>
    </location>
</feature>
<feature type="modified residue" description="N6-succinyllysine" evidence="2">
    <location>
        <position position="96"/>
    </location>
</feature>
<dbReference type="EC" id="2.1.1.49"/>
<dbReference type="EC" id="2.1.1.96"/>
<dbReference type="EMBL" id="CR857085">
    <property type="protein sequence ID" value="CAH89390.1"/>
    <property type="molecule type" value="mRNA"/>
</dbReference>
<dbReference type="RefSeq" id="NP_001124586.1">
    <property type="nucleotide sequence ID" value="NM_001131114.1"/>
</dbReference>
<dbReference type="SMR" id="Q5RFR7"/>
<dbReference type="FunCoup" id="Q5RFR7">
    <property type="interactions" value="190"/>
</dbReference>
<dbReference type="STRING" id="9601.ENSPPYP00000019808"/>
<dbReference type="GeneID" id="100171421"/>
<dbReference type="KEGG" id="pon:100171421"/>
<dbReference type="CTD" id="11185"/>
<dbReference type="eggNOG" id="KOG4564">
    <property type="taxonomic scope" value="Eukaryota"/>
</dbReference>
<dbReference type="HOGENOM" id="CLU_082526_2_0_1"/>
<dbReference type="InParanoid" id="Q5RFR7"/>
<dbReference type="OrthoDB" id="10050085at2759"/>
<dbReference type="TreeFam" id="TF313114"/>
<dbReference type="Proteomes" id="UP000001595">
    <property type="component" value="Chromosome 7"/>
</dbReference>
<dbReference type="GO" id="GO:0005829">
    <property type="term" value="C:cytosol"/>
    <property type="evidence" value="ECO:0000250"/>
    <property type="project" value="UniProtKB"/>
</dbReference>
<dbReference type="GO" id="GO:0030748">
    <property type="term" value="F:amine N-methyltransferase activity"/>
    <property type="evidence" value="ECO:0000250"/>
    <property type="project" value="UniProtKB"/>
</dbReference>
<dbReference type="GO" id="GO:0008170">
    <property type="term" value="F:N-methyltransferase activity"/>
    <property type="evidence" value="ECO:0007669"/>
    <property type="project" value="TreeGrafter"/>
</dbReference>
<dbReference type="GO" id="GO:0004790">
    <property type="term" value="F:thioether S-methyltransferase activity"/>
    <property type="evidence" value="ECO:0007669"/>
    <property type="project" value="UniProtKB-EC"/>
</dbReference>
<dbReference type="GO" id="GO:0009308">
    <property type="term" value="P:amine metabolic process"/>
    <property type="evidence" value="ECO:0000250"/>
    <property type="project" value="UniProtKB"/>
</dbReference>
<dbReference type="GO" id="GO:0032259">
    <property type="term" value="P:methylation"/>
    <property type="evidence" value="ECO:0000250"/>
    <property type="project" value="UniProtKB"/>
</dbReference>
<dbReference type="GO" id="GO:0009636">
    <property type="term" value="P:response to toxic substance"/>
    <property type="evidence" value="ECO:0007669"/>
    <property type="project" value="UniProtKB-KW"/>
</dbReference>
<dbReference type="FunFam" id="3.40.50.150:FF:000065">
    <property type="entry name" value="Phenylethanolamine N-methyltransferase"/>
    <property type="match status" value="1"/>
</dbReference>
<dbReference type="Gene3D" id="3.40.50.150">
    <property type="entry name" value="Vaccinia Virus protein VP39"/>
    <property type="match status" value="1"/>
</dbReference>
<dbReference type="InterPro" id="IPR025820">
    <property type="entry name" value="NNMT/PNMT/TEMT_CS"/>
</dbReference>
<dbReference type="InterPro" id="IPR000940">
    <property type="entry name" value="NNMT_TEMT_trans"/>
</dbReference>
<dbReference type="InterPro" id="IPR053384">
    <property type="entry name" value="SAM-dep_methyltransferase"/>
</dbReference>
<dbReference type="InterPro" id="IPR029063">
    <property type="entry name" value="SAM-dependent_MTases_sf"/>
</dbReference>
<dbReference type="NCBIfam" id="NF041360">
    <property type="entry name" value="GntF_guanitoxin"/>
    <property type="match status" value="1"/>
</dbReference>
<dbReference type="PANTHER" id="PTHR10867:SF33">
    <property type="entry name" value="INDOLETHYLAMINE N-METHYLTRANSFERASE"/>
    <property type="match status" value="1"/>
</dbReference>
<dbReference type="PANTHER" id="PTHR10867">
    <property type="entry name" value="NNMT/PNMT/TEMT FAMILY MEMBER"/>
    <property type="match status" value="1"/>
</dbReference>
<dbReference type="Pfam" id="PF01234">
    <property type="entry name" value="NNMT_PNMT_TEMT"/>
    <property type="match status" value="1"/>
</dbReference>
<dbReference type="PIRSF" id="PIRSF000384">
    <property type="entry name" value="PNMTase"/>
    <property type="match status" value="1"/>
</dbReference>
<dbReference type="SUPFAM" id="SSF53335">
    <property type="entry name" value="S-adenosyl-L-methionine-dependent methyltransferases"/>
    <property type="match status" value="1"/>
</dbReference>
<dbReference type="PROSITE" id="PS01100">
    <property type="entry name" value="NNMT_PNMT_TEMT"/>
    <property type="match status" value="1"/>
</dbReference>
<dbReference type="PROSITE" id="PS51681">
    <property type="entry name" value="SAM_MT_NNMT_PNMT_TEMT"/>
    <property type="match status" value="1"/>
</dbReference>
<gene>
    <name type="primary">INMT</name>
</gene>
<proteinExistence type="evidence at transcript level"/>
<reference key="1">
    <citation type="submission" date="2004-11" db="EMBL/GenBank/DDBJ databases">
        <authorList>
            <consortium name="The German cDNA consortium"/>
        </authorList>
    </citation>
    <scope>NUCLEOTIDE SEQUENCE [LARGE SCALE MRNA]</scope>
    <source>
        <tissue>Liver</tissue>
    </source>
</reference>
<organism>
    <name type="scientific">Pongo abelii</name>
    <name type="common">Sumatran orangutan</name>
    <name type="synonym">Pongo pygmaeus abelii</name>
    <dbReference type="NCBI Taxonomy" id="9601"/>
    <lineage>
        <taxon>Eukaryota</taxon>
        <taxon>Metazoa</taxon>
        <taxon>Chordata</taxon>
        <taxon>Craniata</taxon>
        <taxon>Vertebrata</taxon>
        <taxon>Euteleostomi</taxon>
        <taxon>Mammalia</taxon>
        <taxon>Eutheria</taxon>
        <taxon>Euarchontoglires</taxon>
        <taxon>Primates</taxon>
        <taxon>Haplorrhini</taxon>
        <taxon>Catarrhini</taxon>
        <taxon>Hominidae</taxon>
        <taxon>Pongo</taxon>
    </lineage>
</organism>
<accession>Q5RFR7</accession>
<comment type="function">
    <text evidence="1">Catalyzes the N-methylation of tryptamine and structurally related compounds (By similarity). Functions as a thioether S-methyltransferase and is active with a variety of thioethers and the corresponding selenium and tellurium compounds, including 3-methylthiopropionaldehyde, dimethyl selenide, dimethyl telluride, 2-methylthioethylamine, 2-methylthioethanol, methyl-n-propyl sulfide and diethyl sulfide. Plays an important role in the detoxification of selenium compounds (By similarity).</text>
</comment>
<comment type="catalytic activity">
    <reaction>
        <text>a tertiary amine + S-adenosyl-L-methionine = a methylated tertiary amine + S-adenosyl-L-homocysteine + H(+)</text>
        <dbReference type="Rhea" id="RHEA:53928"/>
        <dbReference type="ChEBI" id="CHEBI:15378"/>
        <dbReference type="ChEBI" id="CHEBI:57856"/>
        <dbReference type="ChEBI" id="CHEBI:59789"/>
        <dbReference type="ChEBI" id="CHEBI:137982"/>
        <dbReference type="ChEBI" id="CHEBI:137983"/>
        <dbReference type="EC" id="2.1.1.49"/>
    </reaction>
</comment>
<comment type="catalytic activity">
    <reaction>
        <text>a secondary amine + S-adenosyl-L-methionine = a methylated secondary amine + S-adenosyl-L-homocysteine + H(+)</text>
        <dbReference type="Rhea" id="RHEA:53924"/>
        <dbReference type="ChEBI" id="CHEBI:15378"/>
        <dbReference type="ChEBI" id="CHEBI:57856"/>
        <dbReference type="ChEBI" id="CHEBI:59789"/>
        <dbReference type="ChEBI" id="CHEBI:137419"/>
        <dbReference type="ChEBI" id="CHEBI:137984"/>
        <dbReference type="EC" id="2.1.1.49"/>
    </reaction>
</comment>
<comment type="catalytic activity">
    <reaction>
        <text>a primary amine + S-adenosyl-L-methionine = a methylated primary amine + S-adenosyl-L-homocysteine + H(+)</text>
        <dbReference type="Rhea" id="RHEA:23136"/>
        <dbReference type="ChEBI" id="CHEBI:15378"/>
        <dbReference type="ChEBI" id="CHEBI:57856"/>
        <dbReference type="ChEBI" id="CHEBI:59789"/>
        <dbReference type="ChEBI" id="CHEBI:65296"/>
        <dbReference type="ChEBI" id="CHEBI:131823"/>
        <dbReference type="EC" id="2.1.1.49"/>
    </reaction>
</comment>
<comment type="catalytic activity">
    <reaction>
        <text>dimethyl sulfide + S-adenosyl-L-methionine = trimethylsulfonium + S-adenosyl-L-homocysteine</text>
        <dbReference type="Rhea" id="RHEA:19613"/>
        <dbReference type="ChEBI" id="CHEBI:17434"/>
        <dbReference type="ChEBI" id="CHEBI:17437"/>
        <dbReference type="ChEBI" id="CHEBI:57856"/>
        <dbReference type="ChEBI" id="CHEBI:59789"/>
        <dbReference type="EC" id="2.1.1.96"/>
    </reaction>
</comment>
<comment type="subunit">
    <text evidence="1">Monomer.</text>
</comment>
<comment type="subcellular location">
    <subcellularLocation>
        <location evidence="1">Cytoplasm</location>
    </subcellularLocation>
</comment>
<comment type="similarity">
    <text evidence="3">Belongs to the class I-like SAM-binding methyltransferase superfamily. NNMT/PNMT/TEMT family.</text>
</comment>
<protein>
    <recommendedName>
        <fullName>Indolethylamine N-methyltransferase</fullName>
        <shortName>Indolamine N-methyltransferase</shortName>
        <ecNumber>2.1.1.49</ecNumber>
        <ecNumber>2.1.1.96</ecNumber>
    </recommendedName>
    <alternativeName>
        <fullName>Aromatic alkylamine N-methyltransferase</fullName>
        <shortName>Amine N-methyltransferase</shortName>
        <shortName>Arylamine N-methyltransferase</shortName>
    </alternativeName>
    <alternativeName>
        <fullName>Thioether S-methyltransferase</fullName>
    </alternativeName>
</protein>
<keyword id="KW-0963">Cytoplasm</keyword>
<keyword id="KW-0216">Detoxification</keyword>
<keyword id="KW-0489">Methyltransferase</keyword>
<keyword id="KW-1185">Reference proteome</keyword>
<keyword id="KW-0949">S-adenosyl-L-methionine</keyword>
<keyword id="KW-0808">Transferase</keyword>